<sequence>MPLVIVAIGVILLLLLMIRFKMNGFIALVLVALAVGLMQGMPLDKVIGSIKAGVGGTLGSLALIMGFGAMLGKMLADCGGAQRIATTLIAKFGKKHIQWAVVLTGFTVGFALFYEVGFVLMLPLVFTIAASANIPLLYVGVPMAAALSVTHGFLPPHPGPTAIATIFNADMGKTLLYGTILAIPTVILAGPVYARVLKGIDKPIPEGLYSAKTFSEEEMPSFGVSVWTSLVPVVLMAMRAIAEMILPKGHAFLPVAEFLGDPVMATLIAVLIAMFTFGLNRGRSMDQINDTLVSSIKIIAMMLLIIGGGGAFKQVLVDSGVDKYIASMMHETNISPLLMAWSIAAVLRIALGSATVAAITAGGIAAPLIATTGVSPELMVIAVGSGSVIFSHVNDPGFWLFKEYFNLTIGETIKSWSMLETIISVCGLVGCLLLNMVI</sequence>
<protein>
    <recommendedName>
        <fullName>High-affinity gluconate transporter</fullName>
    </recommendedName>
    <alternativeName>
        <fullName>Gluconate permease</fullName>
    </alternativeName>
    <alternativeName>
        <fullName>Gnt-I system</fullName>
    </alternativeName>
</protein>
<reference key="1">
    <citation type="journal article" date="1996" name="Biosci. Biotechnol. Biochem.">
        <title>Analysis of the Escherichia coli gntT and gntU genes and comparison of the products with their homologues.</title>
        <authorList>
            <person name="Yamada M."/>
            <person name="Kawai T."/>
            <person name="Izu H."/>
        </authorList>
    </citation>
    <scope>NUCLEOTIDE SEQUENCE [GENOMIC DNA]</scope>
</reference>
<reference key="2">
    <citation type="journal article" date="1997" name="Science">
        <title>The complete genome sequence of Escherichia coli K-12.</title>
        <authorList>
            <person name="Blattner F.R."/>
            <person name="Plunkett G. III"/>
            <person name="Bloch C.A."/>
            <person name="Perna N.T."/>
            <person name="Burland V."/>
            <person name="Riley M."/>
            <person name="Collado-Vides J."/>
            <person name="Glasner J.D."/>
            <person name="Rode C.K."/>
            <person name="Mayhew G.F."/>
            <person name="Gregor J."/>
            <person name="Davis N.W."/>
            <person name="Kirkpatrick H.A."/>
            <person name="Goeden M.A."/>
            <person name="Rose D.J."/>
            <person name="Mau B."/>
            <person name="Shao Y."/>
        </authorList>
    </citation>
    <scope>NUCLEOTIDE SEQUENCE [LARGE SCALE GENOMIC DNA]</scope>
    <source>
        <strain>K12 / MG1655 / ATCC 47076</strain>
    </source>
</reference>
<reference key="3">
    <citation type="journal article" date="2006" name="Nucleic Acids Res.">
        <title>Escherichia coli K-12: a cooperatively developed annotation snapshot -- 2005.</title>
        <authorList>
            <person name="Riley M."/>
            <person name="Abe T."/>
            <person name="Arnaud M.B."/>
            <person name="Berlyn M.K.B."/>
            <person name="Blattner F.R."/>
            <person name="Chaudhuri R.R."/>
            <person name="Glasner J.D."/>
            <person name="Horiuchi T."/>
            <person name="Keseler I.M."/>
            <person name="Kosuge T."/>
            <person name="Mori H."/>
            <person name="Perna N.T."/>
            <person name="Plunkett G. III"/>
            <person name="Rudd K.E."/>
            <person name="Serres M.H."/>
            <person name="Thomas G.H."/>
            <person name="Thomson N.R."/>
            <person name="Wishart D."/>
            <person name="Wanner B.L."/>
        </authorList>
    </citation>
    <scope>SEQUENCE REVISION TO 55-58</scope>
</reference>
<reference key="4">
    <citation type="journal article" date="2006" name="Mol. Syst. Biol.">
        <title>Highly accurate genome sequences of Escherichia coli K-12 strains MG1655 and W3110.</title>
        <authorList>
            <person name="Hayashi K."/>
            <person name="Morooka N."/>
            <person name="Yamamoto Y."/>
            <person name="Fujita K."/>
            <person name="Isono K."/>
            <person name="Choi S."/>
            <person name="Ohtsubo E."/>
            <person name="Baba T."/>
            <person name="Wanner B.L."/>
            <person name="Mori H."/>
            <person name="Horiuchi T."/>
        </authorList>
    </citation>
    <scope>NUCLEOTIDE SEQUENCE [LARGE SCALE GENOMIC DNA]</scope>
    <source>
        <strain>K12 / W3110 / ATCC 27325 / DSM 5911</strain>
    </source>
</reference>
<reference key="5">
    <citation type="journal article" date="1988" name="Mol. Microbiol.">
        <title>Molecular characterization of malQ, the structural gene for the Escherichia coli enzyme amylomaltase.</title>
        <authorList>
            <person name="Pugsley A.P."/>
            <person name="Dubreuil C."/>
        </authorList>
    </citation>
    <scope>PRELIMINARY NUCLEOTIDE SEQUENCE [GENOMIC DNA] OF 381-437</scope>
</reference>
<reference key="6">
    <citation type="journal article" date="1994" name="Nucleic Acids Res.">
        <title>Intrinsic and extrinsic approaches for detecting genes in a bacterial genome.</title>
        <authorList>
            <person name="Borodovsky M."/>
            <person name="Rudd K.E."/>
            <person name="Koonin E.V."/>
        </authorList>
    </citation>
    <scope>IDENTIFICATION</scope>
</reference>
<reference key="7">
    <citation type="journal article" date="1986" name="J. Gen. Microbiol.">
        <title>Mutations affecting gluconate catabolism in Escherichia coli. Genetic mapping of the locus for the thermosensitive gluconokinase.</title>
        <authorList>
            <person name="Isturiz T."/>
            <person name="Palmero E."/>
            <person name="Vitelli-Flores J."/>
        </authorList>
    </citation>
    <scope>CHARACTERIZATION</scope>
</reference>
<reference key="8">
    <citation type="journal article" date="1997" name="J. Bacteriol.">
        <title>Molecular genetic characterization of the Escherichia coli gntT gene of GntI, the main system for gluconate metabolism.</title>
        <authorList>
            <person name="Porco A."/>
            <person name="Peekhaus N."/>
            <person name="Bausch C."/>
            <person name="Tong S."/>
            <person name="Isturiz T."/>
            <person name="Conway T."/>
        </authorList>
    </citation>
    <scope>CHARACTERIZATION</scope>
</reference>
<reference key="9">
    <citation type="journal article" date="2005" name="Science">
        <title>Global topology analysis of the Escherichia coli inner membrane proteome.</title>
        <authorList>
            <person name="Daley D.O."/>
            <person name="Rapp M."/>
            <person name="Granseth E."/>
            <person name="Melen K."/>
            <person name="Drew D."/>
            <person name="von Heijne G."/>
        </authorList>
    </citation>
    <scope>SUBCELLULAR LOCATION</scope>
    <source>
        <strain>K12 / MG1655 / ATCC 47076</strain>
    </source>
</reference>
<evidence type="ECO:0000255" key="1"/>
<evidence type="ECO:0000269" key="2">
    <source>
    </source>
</evidence>
<evidence type="ECO:0000305" key="3"/>
<accession>P39835</accession>
<accession>Q2M780</accession>
<accession>Q6BF35</accession>
<keyword id="KW-0997">Cell inner membrane</keyword>
<keyword id="KW-1003">Cell membrane</keyword>
<keyword id="KW-0311">Gluconate utilization</keyword>
<keyword id="KW-0472">Membrane</keyword>
<keyword id="KW-1185">Reference proteome</keyword>
<keyword id="KW-0762">Sugar transport</keyword>
<keyword id="KW-0812">Transmembrane</keyword>
<keyword id="KW-1133">Transmembrane helix</keyword>
<keyword id="KW-0813">Transport</keyword>
<name>GNTT_ECOLI</name>
<proteinExistence type="evidence at protein level"/>
<gene>
    <name type="primary">gntT</name>
    <name type="synonym">gntM</name>
    <name type="synonym">usgA</name>
    <name type="synonym">yhgC</name>
    <name type="ordered locus">b3415</name>
    <name type="ordered locus">JW5690</name>
</gene>
<organism>
    <name type="scientific">Escherichia coli (strain K12)</name>
    <dbReference type="NCBI Taxonomy" id="83333"/>
    <lineage>
        <taxon>Bacteria</taxon>
        <taxon>Pseudomonadati</taxon>
        <taxon>Pseudomonadota</taxon>
        <taxon>Gammaproteobacteria</taxon>
        <taxon>Enterobacterales</taxon>
        <taxon>Enterobacteriaceae</taxon>
        <taxon>Escherichia</taxon>
    </lineage>
</organism>
<dbReference type="EMBL" id="U18997">
    <property type="protein sequence ID" value="AAA58213.1"/>
    <property type="molecule type" value="Genomic_DNA"/>
</dbReference>
<dbReference type="EMBL" id="U00096">
    <property type="protein sequence ID" value="AAT48179.1"/>
    <property type="molecule type" value="Genomic_DNA"/>
</dbReference>
<dbReference type="EMBL" id="AP009048">
    <property type="protein sequence ID" value="BAE77876.1"/>
    <property type="molecule type" value="Genomic_DNA"/>
</dbReference>
<dbReference type="EMBL" id="M32793">
    <property type="status" value="NOT_ANNOTATED_CDS"/>
    <property type="molecule type" value="Genomic_DNA"/>
</dbReference>
<dbReference type="PIR" id="JC4988">
    <property type="entry name" value="JC4988"/>
</dbReference>
<dbReference type="RefSeq" id="WP_001131758.1">
    <property type="nucleotide sequence ID" value="NZ_STEB01000004.1"/>
</dbReference>
<dbReference type="RefSeq" id="YP_026217.1">
    <property type="nucleotide sequence ID" value="NC_000913.3"/>
</dbReference>
<dbReference type="SMR" id="P39835"/>
<dbReference type="BioGRID" id="4261217">
    <property type="interactions" value="20"/>
</dbReference>
<dbReference type="FunCoup" id="P39835">
    <property type="interactions" value="60"/>
</dbReference>
<dbReference type="STRING" id="511145.b3415"/>
<dbReference type="TCDB" id="2.A.8.1.4">
    <property type="family name" value="the gluconate:h(+) symporter (gntp) family"/>
</dbReference>
<dbReference type="PaxDb" id="511145-b3415"/>
<dbReference type="DNASU" id="947924"/>
<dbReference type="EnsemblBacteria" id="AAT48179">
    <property type="protein sequence ID" value="AAT48179"/>
    <property type="gene ID" value="b3415"/>
</dbReference>
<dbReference type="GeneID" id="75202258"/>
<dbReference type="GeneID" id="947924"/>
<dbReference type="KEGG" id="ecj:JW5690"/>
<dbReference type="KEGG" id="eco:b3415"/>
<dbReference type="KEGG" id="ecoc:C3026_18525"/>
<dbReference type="PATRIC" id="fig|1411691.4.peg.3313"/>
<dbReference type="EchoBASE" id="EB2282"/>
<dbReference type="eggNOG" id="COG2610">
    <property type="taxonomic scope" value="Bacteria"/>
</dbReference>
<dbReference type="HOGENOM" id="CLU_027949_0_0_6"/>
<dbReference type="InParanoid" id="P39835"/>
<dbReference type="OMA" id="GNYSLMR"/>
<dbReference type="OrthoDB" id="9787129at2"/>
<dbReference type="PhylomeDB" id="P39835"/>
<dbReference type="BioCyc" id="EcoCyc:GNTT-MONOMER"/>
<dbReference type="BioCyc" id="MetaCyc:GNTT-MONOMER"/>
<dbReference type="UniPathway" id="UPA00792"/>
<dbReference type="PRO" id="PR:P39835"/>
<dbReference type="Proteomes" id="UP000000625">
    <property type="component" value="Chromosome"/>
</dbReference>
<dbReference type="GO" id="GO:0016020">
    <property type="term" value="C:membrane"/>
    <property type="evidence" value="ECO:0000314"/>
    <property type="project" value="EcoCyc"/>
</dbReference>
<dbReference type="GO" id="GO:0005886">
    <property type="term" value="C:plasma membrane"/>
    <property type="evidence" value="ECO:0000314"/>
    <property type="project" value="EcoCyc"/>
</dbReference>
<dbReference type="GO" id="GO:0015128">
    <property type="term" value="F:gluconate transmembrane transporter activity"/>
    <property type="evidence" value="ECO:0000315"/>
    <property type="project" value="EcoliWiki"/>
</dbReference>
<dbReference type="GO" id="GO:0019521">
    <property type="term" value="P:D-gluconate metabolic process"/>
    <property type="evidence" value="ECO:0007669"/>
    <property type="project" value="UniProtKB-KW"/>
</dbReference>
<dbReference type="GO" id="GO:0035429">
    <property type="term" value="P:gluconate transmembrane transport"/>
    <property type="evidence" value="ECO:0000315"/>
    <property type="project" value="EcoliWiki"/>
</dbReference>
<dbReference type="InterPro" id="IPR003474">
    <property type="entry name" value="Glcn_transporter"/>
</dbReference>
<dbReference type="NCBIfam" id="TIGR00791">
    <property type="entry name" value="gntP"/>
    <property type="match status" value="1"/>
</dbReference>
<dbReference type="NCBIfam" id="NF011560">
    <property type="entry name" value="PRK14984.1"/>
    <property type="match status" value="1"/>
</dbReference>
<dbReference type="PANTHER" id="PTHR30354">
    <property type="entry name" value="GNT FAMILY GLUCONATE TRANSPORTER"/>
    <property type="match status" value="1"/>
</dbReference>
<dbReference type="PANTHER" id="PTHR30354:SF22">
    <property type="entry name" value="HIGH-AFFINITY GLUCONATE TRANSPORTER"/>
    <property type="match status" value="1"/>
</dbReference>
<dbReference type="Pfam" id="PF02447">
    <property type="entry name" value="GntP_permease"/>
    <property type="match status" value="1"/>
</dbReference>
<dbReference type="PIRSF" id="PIRSF002746">
    <property type="entry name" value="Gluconate_transporter"/>
    <property type="match status" value="1"/>
</dbReference>
<feature type="chain" id="PRO_0000061934" description="High-affinity gluconate transporter">
    <location>
        <begin position="1"/>
        <end position="438"/>
    </location>
</feature>
<feature type="transmembrane region" description="Helical" evidence="1">
    <location>
        <begin position="2"/>
        <end position="22"/>
    </location>
</feature>
<feature type="transmembrane region" description="Helical" evidence="1">
    <location>
        <begin position="23"/>
        <end position="43"/>
    </location>
</feature>
<feature type="transmembrane region" description="Helical" evidence="1">
    <location>
        <begin position="52"/>
        <end position="72"/>
    </location>
</feature>
<feature type="transmembrane region" description="Helical" evidence="1">
    <location>
        <begin position="108"/>
        <end position="128"/>
    </location>
</feature>
<feature type="transmembrane region" description="Helical" evidence="1">
    <location>
        <begin position="134"/>
        <end position="154"/>
    </location>
</feature>
<feature type="transmembrane region" description="Helical" evidence="1">
    <location>
        <begin position="174"/>
        <end position="194"/>
    </location>
</feature>
<feature type="transmembrane region" description="Helical" evidence="1">
    <location>
        <begin position="222"/>
        <end position="242"/>
    </location>
</feature>
<feature type="transmembrane region" description="Helical" evidence="1">
    <location>
        <begin position="258"/>
        <end position="278"/>
    </location>
</feature>
<feature type="transmembrane region" description="Helical" evidence="1">
    <location>
        <begin position="292"/>
        <end position="312"/>
    </location>
</feature>
<feature type="transmembrane region" description="Helical" evidence="1">
    <location>
        <begin position="327"/>
        <end position="347"/>
    </location>
</feature>
<feature type="transmembrane region" description="Helical" evidence="1">
    <location>
        <begin position="349"/>
        <end position="369"/>
    </location>
</feature>
<feature type="transmembrane region" description="Helical" evidence="1">
    <location>
        <begin position="370"/>
        <end position="390"/>
    </location>
</feature>
<feature type="transmembrane region" description="Helical" evidence="1">
    <location>
        <begin position="418"/>
        <end position="438"/>
    </location>
</feature>
<feature type="sequence conflict" description="In Ref. 1; AAA58213." evidence="3" ref="1">
    <original>GGTL</original>
    <variation>ADV</variation>
    <location>
        <begin position="55"/>
        <end position="58"/>
    </location>
</feature>
<feature type="sequence conflict" description="In Ref. 5." evidence="3" ref="5">
    <original>S</original>
    <variation>A</variation>
    <location>
        <position position="385"/>
    </location>
</feature>
<feature type="sequence conflict" description="In Ref. 5." evidence="3" ref="5">
    <original>ET</original>
    <variation>VS</variation>
    <location>
        <begin position="420"/>
        <end position="421"/>
    </location>
</feature>
<comment type="function">
    <text>Part of the gluconate utilization system Gnt-I; high-affinity intake of gluconate.</text>
</comment>
<comment type="pathway">
    <text>Carbohydrate acid metabolism; D-gluconate degradation.</text>
</comment>
<comment type="subcellular location">
    <subcellularLocation>
        <location evidence="2">Cell inner membrane</location>
        <topology evidence="2">Multi-pass membrane protein</topology>
    </subcellularLocation>
</comment>
<comment type="similarity">
    <text evidence="3">Belongs to the GntP permease family.</text>
</comment>